<keyword id="KW-1185">Reference proteome</keyword>
<keyword id="KW-0687">Ribonucleoprotein</keyword>
<keyword id="KW-0689">Ribosomal protein</keyword>
<keyword id="KW-0694">RNA-binding</keyword>
<keyword id="KW-0699">rRNA-binding</keyword>
<keyword id="KW-0820">tRNA-binding</keyword>
<comment type="function">
    <text evidence="1">Binds 23S rRNA and is also seen to make contacts with the A and possibly P site tRNAs.</text>
</comment>
<comment type="subunit">
    <text evidence="1">Part of the 50S ribosomal subunit.</text>
</comment>
<comment type="similarity">
    <text evidence="1">Belongs to the universal ribosomal protein uL16 family.</text>
</comment>
<accession>B9JVP4</accession>
<proteinExistence type="inferred from homology"/>
<sequence>MLQPKRTKYRKQFKGRIKGVAKGGFDLAFGEFGLKALEPNRVNAREIEAARRAITRYMKRAGRVWIRVFPDVPVTAKPTEVRMGKGKGSVEYWACKVKPGRMMFEIDGVSEEIAREALRLGSAKLSVKTRFVQRIAE</sequence>
<reference key="1">
    <citation type="journal article" date="2009" name="J. Bacteriol.">
        <title>Genome sequences of three Agrobacterium biovars help elucidate the evolution of multichromosome genomes in bacteria.</title>
        <authorList>
            <person name="Slater S.C."/>
            <person name="Goldman B.S."/>
            <person name="Goodner B."/>
            <person name="Setubal J.C."/>
            <person name="Farrand S.K."/>
            <person name="Nester E.W."/>
            <person name="Burr T.J."/>
            <person name="Banta L."/>
            <person name="Dickerman A.W."/>
            <person name="Paulsen I."/>
            <person name="Otten L."/>
            <person name="Suen G."/>
            <person name="Welch R."/>
            <person name="Almeida N.F."/>
            <person name="Arnold F."/>
            <person name="Burton O.T."/>
            <person name="Du Z."/>
            <person name="Ewing A."/>
            <person name="Godsy E."/>
            <person name="Heisel S."/>
            <person name="Houmiel K.L."/>
            <person name="Jhaveri J."/>
            <person name="Lu J."/>
            <person name="Miller N.M."/>
            <person name="Norton S."/>
            <person name="Chen Q."/>
            <person name="Phoolcharoen W."/>
            <person name="Ohlin V."/>
            <person name="Ondrusek D."/>
            <person name="Pride N."/>
            <person name="Stricklin S.L."/>
            <person name="Sun J."/>
            <person name="Wheeler C."/>
            <person name="Wilson L."/>
            <person name="Zhu H."/>
            <person name="Wood D.W."/>
        </authorList>
    </citation>
    <scope>NUCLEOTIDE SEQUENCE [LARGE SCALE GENOMIC DNA]</scope>
    <source>
        <strain>ATCC BAA-846 / DSM 112012 / S4</strain>
    </source>
</reference>
<evidence type="ECO:0000255" key="1">
    <source>
        <dbReference type="HAMAP-Rule" id="MF_01342"/>
    </source>
</evidence>
<evidence type="ECO:0000305" key="2"/>
<name>RL16_ALLAM</name>
<dbReference type="EMBL" id="CP000633">
    <property type="protein sequence ID" value="ACM36324.1"/>
    <property type="molecule type" value="Genomic_DNA"/>
</dbReference>
<dbReference type="RefSeq" id="WP_015915745.1">
    <property type="nucleotide sequence ID" value="NC_011989.1"/>
</dbReference>
<dbReference type="SMR" id="B9JVP4"/>
<dbReference type="STRING" id="311402.Avi_1847"/>
<dbReference type="GeneID" id="60682410"/>
<dbReference type="KEGG" id="avi:Avi_1847"/>
<dbReference type="eggNOG" id="COG0197">
    <property type="taxonomic scope" value="Bacteria"/>
</dbReference>
<dbReference type="HOGENOM" id="CLU_078858_2_1_5"/>
<dbReference type="Proteomes" id="UP000001596">
    <property type="component" value="Chromosome 1"/>
</dbReference>
<dbReference type="GO" id="GO:0022625">
    <property type="term" value="C:cytosolic large ribosomal subunit"/>
    <property type="evidence" value="ECO:0007669"/>
    <property type="project" value="TreeGrafter"/>
</dbReference>
<dbReference type="GO" id="GO:0019843">
    <property type="term" value="F:rRNA binding"/>
    <property type="evidence" value="ECO:0007669"/>
    <property type="project" value="UniProtKB-UniRule"/>
</dbReference>
<dbReference type="GO" id="GO:0003735">
    <property type="term" value="F:structural constituent of ribosome"/>
    <property type="evidence" value="ECO:0007669"/>
    <property type="project" value="InterPro"/>
</dbReference>
<dbReference type="GO" id="GO:0000049">
    <property type="term" value="F:tRNA binding"/>
    <property type="evidence" value="ECO:0007669"/>
    <property type="project" value="UniProtKB-KW"/>
</dbReference>
<dbReference type="GO" id="GO:0006412">
    <property type="term" value="P:translation"/>
    <property type="evidence" value="ECO:0007669"/>
    <property type="project" value="UniProtKB-UniRule"/>
</dbReference>
<dbReference type="CDD" id="cd01433">
    <property type="entry name" value="Ribosomal_L16_L10e"/>
    <property type="match status" value="1"/>
</dbReference>
<dbReference type="FunFam" id="3.90.1170.10:FF:000001">
    <property type="entry name" value="50S ribosomal protein L16"/>
    <property type="match status" value="1"/>
</dbReference>
<dbReference type="Gene3D" id="3.90.1170.10">
    <property type="entry name" value="Ribosomal protein L10e/L16"/>
    <property type="match status" value="1"/>
</dbReference>
<dbReference type="HAMAP" id="MF_01342">
    <property type="entry name" value="Ribosomal_uL16"/>
    <property type="match status" value="1"/>
</dbReference>
<dbReference type="InterPro" id="IPR047873">
    <property type="entry name" value="Ribosomal_uL16"/>
</dbReference>
<dbReference type="InterPro" id="IPR000114">
    <property type="entry name" value="Ribosomal_uL16_bact-type"/>
</dbReference>
<dbReference type="InterPro" id="IPR020798">
    <property type="entry name" value="Ribosomal_uL16_CS"/>
</dbReference>
<dbReference type="InterPro" id="IPR016180">
    <property type="entry name" value="Ribosomal_uL16_dom"/>
</dbReference>
<dbReference type="InterPro" id="IPR036920">
    <property type="entry name" value="Ribosomal_uL16_sf"/>
</dbReference>
<dbReference type="NCBIfam" id="TIGR01164">
    <property type="entry name" value="rplP_bact"/>
    <property type="match status" value="1"/>
</dbReference>
<dbReference type="PANTHER" id="PTHR12220">
    <property type="entry name" value="50S/60S RIBOSOMAL PROTEIN L16"/>
    <property type="match status" value="1"/>
</dbReference>
<dbReference type="PANTHER" id="PTHR12220:SF13">
    <property type="entry name" value="LARGE RIBOSOMAL SUBUNIT PROTEIN UL16M"/>
    <property type="match status" value="1"/>
</dbReference>
<dbReference type="Pfam" id="PF00252">
    <property type="entry name" value="Ribosomal_L16"/>
    <property type="match status" value="1"/>
</dbReference>
<dbReference type="PRINTS" id="PR00060">
    <property type="entry name" value="RIBOSOMALL16"/>
</dbReference>
<dbReference type="SUPFAM" id="SSF54686">
    <property type="entry name" value="Ribosomal protein L16p/L10e"/>
    <property type="match status" value="1"/>
</dbReference>
<dbReference type="PROSITE" id="PS00586">
    <property type="entry name" value="RIBOSOMAL_L16_1"/>
    <property type="match status" value="1"/>
</dbReference>
<dbReference type="PROSITE" id="PS00701">
    <property type="entry name" value="RIBOSOMAL_L16_2"/>
    <property type="match status" value="1"/>
</dbReference>
<organism>
    <name type="scientific">Allorhizobium ampelinum (strain ATCC BAA-846 / DSM 112012 / S4)</name>
    <name type="common">Agrobacterium vitis (strain S4)</name>
    <dbReference type="NCBI Taxonomy" id="311402"/>
    <lineage>
        <taxon>Bacteria</taxon>
        <taxon>Pseudomonadati</taxon>
        <taxon>Pseudomonadota</taxon>
        <taxon>Alphaproteobacteria</taxon>
        <taxon>Hyphomicrobiales</taxon>
        <taxon>Rhizobiaceae</taxon>
        <taxon>Rhizobium/Agrobacterium group</taxon>
        <taxon>Allorhizobium</taxon>
        <taxon>Allorhizobium ampelinum</taxon>
    </lineage>
</organism>
<gene>
    <name evidence="1" type="primary">rplP</name>
    <name type="ordered locus">Avi_1847</name>
</gene>
<protein>
    <recommendedName>
        <fullName evidence="1">Large ribosomal subunit protein uL16</fullName>
    </recommendedName>
    <alternativeName>
        <fullName evidence="2">50S ribosomal protein L16</fullName>
    </alternativeName>
</protein>
<feature type="chain" id="PRO_1000166329" description="Large ribosomal subunit protein uL16">
    <location>
        <begin position="1"/>
        <end position="137"/>
    </location>
</feature>